<feature type="chain" id="PRO_0000321999" description="C4-dicarboxylate transport protein">
    <location>
        <begin position="1"/>
        <end position="449"/>
    </location>
</feature>
<feature type="transmembrane region" description="Helical" evidence="1">
    <location>
        <begin position="28"/>
        <end position="48"/>
    </location>
</feature>
<feature type="transmembrane region" description="Helical" evidence="1">
    <location>
        <begin position="66"/>
        <end position="86"/>
    </location>
</feature>
<feature type="transmembrane region" description="Helical" evidence="1">
    <location>
        <begin position="101"/>
        <end position="121"/>
    </location>
</feature>
<feature type="transmembrane region" description="Helical" evidence="1">
    <location>
        <begin position="167"/>
        <end position="187"/>
    </location>
</feature>
<feature type="transmembrane region" description="Helical" evidence="1">
    <location>
        <begin position="205"/>
        <end position="225"/>
    </location>
</feature>
<feature type="transmembrane region" description="Helical" evidence="1">
    <location>
        <begin position="241"/>
        <end position="261"/>
    </location>
</feature>
<feature type="transmembrane region" description="Helical" evidence="1">
    <location>
        <begin position="326"/>
        <end position="346"/>
    </location>
</feature>
<feature type="transmembrane region" description="Helical" evidence="1">
    <location>
        <begin position="370"/>
        <end position="390"/>
    </location>
</feature>
<feature type="region of interest" description="Disordered" evidence="2">
    <location>
        <begin position="1"/>
        <end position="20"/>
    </location>
</feature>
<feature type="compositionally biased region" description="Low complexity" evidence="2">
    <location>
        <begin position="10"/>
        <end position="20"/>
    </location>
</feature>
<dbReference type="EMBL" id="CP000301">
    <property type="protein sequence ID" value="ABD88407.1"/>
    <property type="molecule type" value="Genomic_DNA"/>
</dbReference>
<dbReference type="SMR" id="Q213M9"/>
<dbReference type="STRING" id="316056.RPC_2859"/>
<dbReference type="KEGG" id="rpc:RPC_2859"/>
<dbReference type="eggNOG" id="COG1301">
    <property type="taxonomic scope" value="Bacteria"/>
</dbReference>
<dbReference type="HOGENOM" id="CLU_019375_7_0_5"/>
<dbReference type="GO" id="GO:0005886">
    <property type="term" value="C:plasma membrane"/>
    <property type="evidence" value="ECO:0007669"/>
    <property type="project" value="UniProtKB-SubCell"/>
</dbReference>
<dbReference type="GO" id="GO:0015138">
    <property type="term" value="F:fumarate transmembrane transporter activity"/>
    <property type="evidence" value="ECO:0007669"/>
    <property type="project" value="TreeGrafter"/>
</dbReference>
<dbReference type="GO" id="GO:0015366">
    <property type="term" value="F:malate:proton symporter activity"/>
    <property type="evidence" value="ECO:0007669"/>
    <property type="project" value="TreeGrafter"/>
</dbReference>
<dbReference type="GO" id="GO:0015141">
    <property type="term" value="F:succinate transmembrane transporter activity"/>
    <property type="evidence" value="ECO:0007669"/>
    <property type="project" value="TreeGrafter"/>
</dbReference>
<dbReference type="GO" id="GO:0070778">
    <property type="term" value="P:L-aspartate transmembrane transport"/>
    <property type="evidence" value="ECO:0007669"/>
    <property type="project" value="TreeGrafter"/>
</dbReference>
<dbReference type="FunFam" id="1.10.3860.10:FF:000001">
    <property type="entry name" value="C4-dicarboxylate transport protein"/>
    <property type="match status" value="1"/>
</dbReference>
<dbReference type="Gene3D" id="1.10.3860.10">
    <property type="entry name" value="Sodium:dicarboxylate symporter"/>
    <property type="match status" value="1"/>
</dbReference>
<dbReference type="HAMAP" id="MF_01300">
    <property type="entry name" value="C4_dicarb_transport"/>
    <property type="match status" value="1"/>
</dbReference>
<dbReference type="InterPro" id="IPR023954">
    <property type="entry name" value="C4_dicarb_transport"/>
</dbReference>
<dbReference type="InterPro" id="IPR001991">
    <property type="entry name" value="Na-dicarboxylate_symporter"/>
</dbReference>
<dbReference type="InterPro" id="IPR018107">
    <property type="entry name" value="Na-dicarboxylate_symporter_CS"/>
</dbReference>
<dbReference type="InterPro" id="IPR036458">
    <property type="entry name" value="Na:dicarbo_symporter_sf"/>
</dbReference>
<dbReference type="NCBIfam" id="NF002461">
    <property type="entry name" value="PRK01663.1"/>
    <property type="match status" value="1"/>
</dbReference>
<dbReference type="PANTHER" id="PTHR42865:SF1">
    <property type="entry name" value="AEROBIC C4-DICARBOXYLATE TRANSPORT PROTEIN"/>
    <property type="match status" value="1"/>
</dbReference>
<dbReference type="PANTHER" id="PTHR42865">
    <property type="entry name" value="PROTON/GLUTAMATE-ASPARTATE SYMPORTER"/>
    <property type="match status" value="1"/>
</dbReference>
<dbReference type="Pfam" id="PF00375">
    <property type="entry name" value="SDF"/>
    <property type="match status" value="1"/>
</dbReference>
<dbReference type="PRINTS" id="PR00173">
    <property type="entry name" value="EDTRNSPORT"/>
</dbReference>
<dbReference type="SUPFAM" id="SSF118215">
    <property type="entry name" value="Proton glutamate symport protein"/>
    <property type="match status" value="1"/>
</dbReference>
<dbReference type="PROSITE" id="PS00714">
    <property type="entry name" value="NA_DICARBOXYL_SYMP_2"/>
    <property type="match status" value="1"/>
</dbReference>
<comment type="function">
    <text evidence="1">Responsible for the transport of dicarboxylates such as succinate, fumarate, and malate from the periplasm across the membrane.</text>
</comment>
<comment type="subcellular location">
    <subcellularLocation>
        <location evidence="1">Cell inner membrane</location>
        <topology evidence="1">Multi-pass membrane protein</topology>
    </subcellularLocation>
</comment>
<comment type="similarity">
    <text evidence="1">Belongs to the dicarboxylate/amino acid:cation symporter (DAACS) (TC 2.A.23) family.</text>
</comment>
<reference key="1">
    <citation type="submission" date="2006-03" db="EMBL/GenBank/DDBJ databases">
        <title>Complete sequence of Rhodopseudomonas palustris BisB18.</title>
        <authorList>
            <consortium name="US DOE Joint Genome Institute"/>
            <person name="Copeland A."/>
            <person name="Lucas S."/>
            <person name="Lapidus A."/>
            <person name="Barry K."/>
            <person name="Detter J.C."/>
            <person name="Glavina del Rio T."/>
            <person name="Hammon N."/>
            <person name="Israni S."/>
            <person name="Dalin E."/>
            <person name="Tice H."/>
            <person name="Pitluck S."/>
            <person name="Chain P."/>
            <person name="Malfatti S."/>
            <person name="Shin M."/>
            <person name="Vergez L."/>
            <person name="Schmutz J."/>
            <person name="Larimer F."/>
            <person name="Land M."/>
            <person name="Hauser L."/>
            <person name="Pelletier D.A."/>
            <person name="Kyrpides N."/>
            <person name="Anderson I."/>
            <person name="Oda Y."/>
            <person name="Harwood C.S."/>
            <person name="Richardson P."/>
        </authorList>
    </citation>
    <scope>NUCLEOTIDE SEQUENCE [LARGE SCALE GENOMIC DNA]</scope>
    <source>
        <strain>BisB18</strain>
    </source>
</reference>
<protein>
    <recommendedName>
        <fullName evidence="1">C4-dicarboxylate transport protein</fullName>
    </recommendedName>
</protein>
<organism>
    <name type="scientific">Rhodopseudomonas palustris (strain BisB18)</name>
    <dbReference type="NCBI Taxonomy" id="316056"/>
    <lineage>
        <taxon>Bacteria</taxon>
        <taxon>Pseudomonadati</taxon>
        <taxon>Pseudomonadota</taxon>
        <taxon>Alphaproteobacteria</taxon>
        <taxon>Hyphomicrobiales</taxon>
        <taxon>Nitrobacteraceae</taxon>
        <taxon>Rhodopseudomonas</taxon>
    </lineage>
</organism>
<accession>Q213M9</accession>
<gene>
    <name evidence="1" type="primary">dctA</name>
    <name type="ordered locus">RPC_2859</name>
</gene>
<keyword id="KW-0997">Cell inner membrane</keyword>
<keyword id="KW-1003">Cell membrane</keyword>
<keyword id="KW-0472">Membrane</keyword>
<keyword id="KW-0769">Symport</keyword>
<keyword id="KW-0812">Transmembrane</keyword>
<keyword id="KW-1133">Transmembrane helix</keyword>
<keyword id="KW-0813">Transport</keyword>
<evidence type="ECO:0000255" key="1">
    <source>
        <dbReference type="HAMAP-Rule" id="MF_01300"/>
    </source>
</evidence>
<evidence type="ECO:0000256" key="2">
    <source>
        <dbReference type="SAM" id="MobiDB-lite"/>
    </source>
</evidence>
<proteinExistence type="inferred from homology"/>
<sequence>MSALTESFGPVPSAKSKPPAARKPWYKLLYLQVLVAIVLGVLLGWLSPHIATNEWVKALGDGFVKLIKMVIAPIIFCTVVSGIAHIQDARKVGRVGVKALLYFEVVSSFALLIGLVVGNVVQIGHGLGATGDAAAVSKYVKQAEAQHSVDFVLNIIPDSVVGAFAKGDILQVLLFAILFGFALMTLGERGHRLRDVIDDASHAVFGVIAIVMKAAPVGAFGAMAFTIGKFGPAALGNLIGLIAVFYITAALFVVLVLGLIAKIVGFNIFKFLKYIKDELLIVLGTSSSESALPQLMEKLERLGCSKSVVGLVVPTGYSFNLDGTNIYMTLATLFIAQALGVDLTWTEQLTILLVAMLTSKGASGVSGAGFITLAATLSVVNPALVPGMAIVFSVDKFMSEVRALTNITGNGVATVFVSWWENELDHDKLAAALNKTIDPSDIETAVTTG</sequence>
<name>DCTA_RHOPB</name>